<keyword id="KW-0007">Acetylation</keyword>
<keyword id="KW-0143">Chaperone</keyword>
<keyword id="KW-0963">Cytoplasm</keyword>
<keyword id="KW-0256">Endoplasmic reticulum</keyword>
<keyword id="KW-0597">Phosphoprotein</keyword>
<keyword id="KW-1185">Reference proteome</keyword>
<dbReference type="EMBL" id="AJ238270">
    <property type="protein sequence ID" value="CAB87195.1"/>
    <property type="molecule type" value="mRNA"/>
</dbReference>
<dbReference type="EMBL" id="AK042203">
    <property type="protein sequence ID" value="BAC31197.1"/>
    <property type="molecule type" value="mRNA"/>
</dbReference>
<dbReference type="EMBL" id="AK088118">
    <property type="protein sequence ID" value="BAC40157.1"/>
    <property type="molecule type" value="mRNA"/>
</dbReference>
<dbReference type="EMBL" id="BC032965">
    <property type="protein sequence ID" value="AAH32965.1"/>
    <property type="molecule type" value="mRNA"/>
</dbReference>
<dbReference type="EMBL" id="BC060285">
    <property type="protein sequence ID" value="AAH60285.1"/>
    <property type="molecule type" value="mRNA"/>
</dbReference>
<dbReference type="CCDS" id="CCDS28352.1"/>
<dbReference type="PIR" id="JC7279">
    <property type="entry name" value="JC7279"/>
</dbReference>
<dbReference type="RefSeq" id="NP_062410.1">
    <property type="nucleotide sequence ID" value="NM_019537.3"/>
</dbReference>
<dbReference type="SMR" id="Q9JK23"/>
<dbReference type="BioGRID" id="207810">
    <property type="interactions" value="16"/>
</dbReference>
<dbReference type="FunCoup" id="Q9JK23">
    <property type="interactions" value="1955"/>
</dbReference>
<dbReference type="IntAct" id="Q9JK23">
    <property type="interactions" value="1"/>
</dbReference>
<dbReference type="MINT" id="Q9JK23"/>
<dbReference type="STRING" id="10090.ENSMUSP00000023630"/>
<dbReference type="iPTMnet" id="Q9JK23"/>
<dbReference type="PhosphoSitePlus" id="Q9JK23"/>
<dbReference type="SwissPalm" id="Q9JK23"/>
<dbReference type="jPOST" id="Q9JK23"/>
<dbReference type="PaxDb" id="10090-ENSMUSP00000023630"/>
<dbReference type="PeptideAtlas" id="Q9JK23"/>
<dbReference type="ProteomicsDB" id="301865"/>
<dbReference type="Pumba" id="Q9JK23"/>
<dbReference type="Antibodypedia" id="23276">
    <property type="antibodies" value="215 antibodies from 33 providers"/>
</dbReference>
<dbReference type="DNASU" id="56088"/>
<dbReference type="Ensembl" id="ENSMUST00000023630.16">
    <property type="protein sequence ID" value="ENSMUSP00000023630.8"/>
    <property type="gene ID" value="ENSMUSG00000022913.17"/>
</dbReference>
<dbReference type="GeneID" id="56088"/>
<dbReference type="KEGG" id="mmu:56088"/>
<dbReference type="UCSC" id="uc008ach.1">
    <property type="organism name" value="mouse"/>
</dbReference>
<dbReference type="AGR" id="MGI:1860263"/>
<dbReference type="CTD" id="8624"/>
<dbReference type="MGI" id="MGI:1860263">
    <property type="gene designation" value="Psmg1"/>
</dbReference>
<dbReference type="VEuPathDB" id="HostDB:ENSMUSG00000022913"/>
<dbReference type="eggNOG" id="ENOG502QTPH">
    <property type="taxonomic scope" value="Eukaryota"/>
</dbReference>
<dbReference type="GeneTree" id="ENSGT00500000044950"/>
<dbReference type="HOGENOM" id="CLU_083637_0_0_1"/>
<dbReference type="InParanoid" id="Q9JK23"/>
<dbReference type="OMA" id="SVLICQV"/>
<dbReference type="OrthoDB" id="17536at2759"/>
<dbReference type="PhylomeDB" id="Q9JK23"/>
<dbReference type="TreeFam" id="TF331909"/>
<dbReference type="Reactome" id="R-MMU-9907900">
    <property type="pathway name" value="Proteasome assembly"/>
</dbReference>
<dbReference type="BioGRID-ORCS" id="56088">
    <property type="hits" value="16 hits in 75 CRISPR screens"/>
</dbReference>
<dbReference type="ChiTaRS" id="Psmg1">
    <property type="organism name" value="mouse"/>
</dbReference>
<dbReference type="PRO" id="PR:Q9JK23"/>
<dbReference type="Proteomes" id="UP000000589">
    <property type="component" value="Chromosome 16"/>
</dbReference>
<dbReference type="RNAct" id="Q9JK23">
    <property type="molecule type" value="protein"/>
</dbReference>
<dbReference type="Bgee" id="ENSMUSG00000022913">
    <property type="expression patterns" value="Expressed in otic placode and 281 other cell types or tissues"/>
</dbReference>
<dbReference type="ExpressionAtlas" id="Q9JK23">
    <property type="expression patterns" value="baseline and differential"/>
</dbReference>
<dbReference type="GO" id="GO:0005737">
    <property type="term" value="C:cytoplasm"/>
    <property type="evidence" value="ECO:0000250"/>
    <property type="project" value="UniProtKB"/>
</dbReference>
<dbReference type="GO" id="GO:0005829">
    <property type="term" value="C:cytosol"/>
    <property type="evidence" value="ECO:0007669"/>
    <property type="project" value="Ensembl"/>
</dbReference>
<dbReference type="GO" id="GO:0005783">
    <property type="term" value="C:endoplasmic reticulum"/>
    <property type="evidence" value="ECO:0000250"/>
    <property type="project" value="UniProtKB"/>
</dbReference>
<dbReference type="GO" id="GO:0005794">
    <property type="term" value="C:Golgi apparatus"/>
    <property type="evidence" value="ECO:0007669"/>
    <property type="project" value="Ensembl"/>
</dbReference>
<dbReference type="GO" id="GO:0005654">
    <property type="term" value="C:nucleoplasm"/>
    <property type="evidence" value="ECO:0007669"/>
    <property type="project" value="Ensembl"/>
</dbReference>
<dbReference type="GO" id="GO:0101031">
    <property type="term" value="C:protein folding chaperone complex"/>
    <property type="evidence" value="ECO:0007669"/>
    <property type="project" value="Ensembl"/>
</dbReference>
<dbReference type="GO" id="GO:0060090">
    <property type="term" value="F:molecular adaptor activity"/>
    <property type="evidence" value="ECO:0007669"/>
    <property type="project" value="Ensembl"/>
</dbReference>
<dbReference type="GO" id="GO:0070628">
    <property type="term" value="F:proteasome binding"/>
    <property type="evidence" value="ECO:0000314"/>
    <property type="project" value="MGI"/>
</dbReference>
<dbReference type="GO" id="GO:0021930">
    <property type="term" value="P:cerebellar granule cell precursor proliferation"/>
    <property type="evidence" value="ECO:0000315"/>
    <property type="project" value="MGI"/>
</dbReference>
<dbReference type="GO" id="GO:0051131">
    <property type="term" value="P:chaperone-mediated protein complex assembly"/>
    <property type="evidence" value="ECO:0000250"/>
    <property type="project" value="UniProtKB"/>
</dbReference>
<dbReference type="GO" id="GO:0080129">
    <property type="term" value="P:proteasome core complex assembly"/>
    <property type="evidence" value="ECO:0000315"/>
    <property type="project" value="MGI"/>
</dbReference>
<dbReference type="InterPro" id="IPR016565">
    <property type="entry name" value="Proteasome_assmbl_chp_1"/>
</dbReference>
<dbReference type="PANTHER" id="PTHR15069">
    <property type="entry name" value="PROTEASOME ASSEMBLY CHAPERONE 1"/>
    <property type="match status" value="1"/>
</dbReference>
<dbReference type="PANTHER" id="PTHR15069:SF1">
    <property type="entry name" value="PROTEASOME ASSEMBLY CHAPERONE 1"/>
    <property type="match status" value="1"/>
</dbReference>
<dbReference type="Pfam" id="PF16094">
    <property type="entry name" value="PAC1"/>
    <property type="match status" value="1"/>
</dbReference>
<dbReference type="PIRSF" id="PIRSF010076">
    <property type="entry name" value="Psome_chaperone-1"/>
    <property type="match status" value="1"/>
</dbReference>
<name>PSMG1_MOUSE</name>
<sequence length="289" mass="33104">MAATFFGEVVKAPCRAGTEEEEEEEEQSRRDTPEDREVRRQLARKREVRLLRRQTETSLEAVLLETHPCSKFIIAVGSNATAFLSAFVMNSGVWEEVGCAKLWNEWCRTTDTVRLSPTDVFCVFYQLKSDPSVFLCQCSCYIAEDQQFQWLEKVFGFQPRKSMQVTVLTCRHITDYKTPESTCSLSSPFLRALKTQTFKDALCCPLLEQPNIVHDLSAAVLSYCQVWKIPAVLYLCYTDVMKLDRVTVEAFKPLLSSRSLKCLVKNIPESTEILKKLMTTNEIQSNIYT</sequence>
<proteinExistence type="evidence at protein level"/>
<organism>
    <name type="scientific">Mus musculus</name>
    <name type="common">Mouse</name>
    <dbReference type="NCBI Taxonomy" id="10090"/>
    <lineage>
        <taxon>Eukaryota</taxon>
        <taxon>Metazoa</taxon>
        <taxon>Chordata</taxon>
        <taxon>Craniata</taxon>
        <taxon>Vertebrata</taxon>
        <taxon>Euteleostomi</taxon>
        <taxon>Mammalia</taxon>
        <taxon>Eutheria</taxon>
        <taxon>Euarchontoglires</taxon>
        <taxon>Glires</taxon>
        <taxon>Rodentia</taxon>
        <taxon>Myomorpha</taxon>
        <taxon>Muroidea</taxon>
        <taxon>Muridae</taxon>
        <taxon>Murinae</taxon>
        <taxon>Mus</taxon>
        <taxon>Mus</taxon>
    </lineage>
</organism>
<gene>
    <name evidence="11" type="primary">Psmg1</name>
    <name evidence="11" type="synonym">Dscr2</name>
</gene>
<evidence type="ECO:0000250" key="1">
    <source>
        <dbReference type="UniProtKB" id="O95456"/>
    </source>
</evidence>
<evidence type="ECO:0000255" key="2"/>
<evidence type="ECO:0000256" key="3">
    <source>
        <dbReference type="SAM" id="MobiDB-lite"/>
    </source>
</evidence>
<evidence type="ECO:0000269" key="4">
    <source>
    </source>
</evidence>
<evidence type="ECO:0000305" key="5"/>
<evidence type="ECO:0000312" key="6">
    <source>
        <dbReference type="EMBL" id="AAH32965.1"/>
    </source>
</evidence>
<evidence type="ECO:0000312" key="7">
    <source>
        <dbReference type="EMBL" id="AAH60285.1"/>
    </source>
</evidence>
<evidence type="ECO:0000312" key="8">
    <source>
        <dbReference type="EMBL" id="BAC31197.1"/>
    </source>
</evidence>
<evidence type="ECO:0000312" key="9">
    <source>
        <dbReference type="EMBL" id="BAC40157.1"/>
    </source>
</evidence>
<evidence type="ECO:0000312" key="10">
    <source>
        <dbReference type="EMBL" id="CAB87195.1"/>
    </source>
</evidence>
<evidence type="ECO:0000312" key="11">
    <source>
        <dbReference type="MGI" id="MGI:1860263"/>
    </source>
</evidence>
<protein>
    <recommendedName>
        <fullName>Proteasome assembly chaperone 1</fullName>
    </recommendedName>
    <alternativeName>
        <fullName>Down syndrome critical region protein 2 homolog</fullName>
    </alternativeName>
</protein>
<reference evidence="5 10" key="1">
    <citation type="journal article" date="2000" name="Biochem. Biophys. Res. Commun.">
        <title>Down syndrome critical region gene 2: expression during mouse development and in human cell lines indicates a function related to cell proliferation.</title>
        <authorList>
            <person name="Vidal-Taboada J.M."/>
            <person name="Lu A."/>
            <person name="Pique M."/>
            <person name="Pons G."/>
            <person name="Gil J."/>
            <person name="Oliva R."/>
        </authorList>
    </citation>
    <scope>NUCLEOTIDE SEQUENCE [MRNA]</scope>
    <scope>TISSUE SPECIFICITY</scope>
    <scope>DEVELOPMENTAL STAGE</scope>
</reference>
<reference evidence="8" key="2">
    <citation type="journal article" date="2005" name="Science">
        <title>The transcriptional landscape of the mammalian genome.</title>
        <authorList>
            <person name="Carninci P."/>
            <person name="Kasukawa T."/>
            <person name="Katayama S."/>
            <person name="Gough J."/>
            <person name="Frith M.C."/>
            <person name="Maeda N."/>
            <person name="Oyama R."/>
            <person name="Ravasi T."/>
            <person name="Lenhard B."/>
            <person name="Wells C."/>
            <person name="Kodzius R."/>
            <person name="Shimokawa K."/>
            <person name="Bajic V.B."/>
            <person name="Brenner S.E."/>
            <person name="Batalov S."/>
            <person name="Forrest A.R."/>
            <person name="Zavolan M."/>
            <person name="Davis M.J."/>
            <person name="Wilming L.G."/>
            <person name="Aidinis V."/>
            <person name="Allen J.E."/>
            <person name="Ambesi-Impiombato A."/>
            <person name="Apweiler R."/>
            <person name="Aturaliya R.N."/>
            <person name="Bailey T.L."/>
            <person name="Bansal M."/>
            <person name="Baxter L."/>
            <person name="Beisel K.W."/>
            <person name="Bersano T."/>
            <person name="Bono H."/>
            <person name="Chalk A.M."/>
            <person name="Chiu K.P."/>
            <person name="Choudhary V."/>
            <person name="Christoffels A."/>
            <person name="Clutterbuck D.R."/>
            <person name="Crowe M.L."/>
            <person name="Dalla E."/>
            <person name="Dalrymple B.P."/>
            <person name="de Bono B."/>
            <person name="Della Gatta G."/>
            <person name="di Bernardo D."/>
            <person name="Down T."/>
            <person name="Engstrom P."/>
            <person name="Fagiolini M."/>
            <person name="Faulkner G."/>
            <person name="Fletcher C.F."/>
            <person name="Fukushima T."/>
            <person name="Furuno M."/>
            <person name="Futaki S."/>
            <person name="Gariboldi M."/>
            <person name="Georgii-Hemming P."/>
            <person name="Gingeras T.R."/>
            <person name="Gojobori T."/>
            <person name="Green R.E."/>
            <person name="Gustincich S."/>
            <person name="Harbers M."/>
            <person name="Hayashi Y."/>
            <person name="Hensch T.K."/>
            <person name="Hirokawa N."/>
            <person name="Hill D."/>
            <person name="Huminiecki L."/>
            <person name="Iacono M."/>
            <person name="Ikeo K."/>
            <person name="Iwama A."/>
            <person name="Ishikawa T."/>
            <person name="Jakt M."/>
            <person name="Kanapin A."/>
            <person name="Katoh M."/>
            <person name="Kawasawa Y."/>
            <person name="Kelso J."/>
            <person name="Kitamura H."/>
            <person name="Kitano H."/>
            <person name="Kollias G."/>
            <person name="Krishnan S.P."/>
            <person name="Kruger A."/>
            <person name="Kummerfeld S.K."/>
            <person name="Kurochkin I.V."/>
            <person name="Lareau L.F."/>
            <person name="Lazarevic D."/>
            <person name="Lipovich L."/>
            <person name="Liu J."/>
            <person name="Liuni S."/>
            <person name="McWilliam S."/>
            <person name="Madan Babu M."/>
            <person name="Madera M."/>
            <person name="Marchionni L."/>
            <person name="Matsuda H."/>
            <person name="Matsuzawa S."/>
            <person name="Miki H."/>
            <person name="Mignone F."/>
            <person name="Miyake S."/>
            <person name="Morris K."/>
            <person name="Mottagui-Tabar S."/>
            <person name="Mulder N."/>
            <person name="Nakano N."/>
            <person name="Nakauchi H."/>
            <person name="Ng P."/>
            <person name="Nilsson R."/>
            <person name="Nishiguchi S."/>
            <person name="Nishikawa S."/>
            <person name="Nori F."/>
            <person name="Ohara O."/>
            <person name="Okazaki Y."/>
            <person name="Orlando V."/>
            <person name="Pang K.C."/>
            <person name="Pavan W.J."/>
            <person name="Pavesi G."/>
            <person name="Pesole G."/>
            <person name="Petrovsky N."/>
            <person name="Piazza S."/>
            <person name="Reed J."/>
            <person name="Reid J.F."/>
            <person name="Ring B.Z."/>
            <person name="Ringwald M."/>
            <person name="Rost B."/>
            <person name="Ruan Y."/>
            <person name="Salzberg S.L."/>
            <person name="Sandelin A."/>
            <person name="Schneider C."/>
            <person name="Schoenbach C."/>
            <person name="Sekiguchi K."/>
            <person name="Semple C.A."/>
            <person name="Seno S."/>
            <person name="Sessa L."/>
            <person name="Sheng Y."/>
            <person name="Shibata Y."/>
            <person name="Shimada H."/>
            <person name="Shimada K."/>
            <person name="Silva D."/>
            <person name="Sinclair B."/>
            <person name="Sperling S."/>
            <person name="Stupka E."/>
            <person name="Sugiura K."/>
            <person name="Sultana R."/>
            <person name="Takenaka Y."/>
            <person name="Taki K."/>
            <person name="Tammoja K."/>
            <person name="Tan S.L."/>
            <person name="Tang S."/>
            <person name="Taylor M.S."/>
            <person name="Tegner J."/>
            <person name="Teichmann S.A."/>
            <person name="Ueda H.R."/>
            <person name="van Nimwegen E."/>
            <person name="Verardo R."/>
            <person name="Wei C.L."/>
            <person name="Yagi K."/>
            <person name="Yamanishi H."/>
            <person name="Zabarovsky E."/>
            <person name="Zhu S."/>
            <person name="Zimmer A."/>
            <person name="Hide W."/>
            <person name="Bult C."/>
            <person name="Grimmond S.M."/>
            <person name="Teasdale R.D."/>
            <person name="Liu E.T."/>
            <person name="Brusic V."/>
            <person name="Quackenbush J."/>
            <person name="Wahlestedt C."/>
            <person name="Mattick J.S."/>
            <person name="Hume D.A."/>
            <person name="Kai C."/>
            <person name="Sasaki D."/>
            <person name="Tomaru Y."/>
            <person name="Fukuda S."/>
            <person name="Kanamori-Katayama M."/>
            <person name="Suzuki M."/>
            <person name="Aoki J."/>
            <person name="Arakawa T."/>
            <person name="Iida J."/>
            <person name="Imamura K."/>
            <person name="Itoh M."/>
            <person name="Kato T."/>
            <person name="Kawaji H."/>
            <person name="Kawagashira N."/>
            <person name="Kawashima T."/>
            <person name="Kojima M."/>
            <person name="Kondo S."/>
            <person name="Konno H."/>
            <person name="Nakano K."/>
            <person name="Ninomiya N."/>
            <person name="Nishio T."/>
            <person name="Okada M."/>
            <person name="Plessy C."/>
            <person name="Shibata K."/>
            <person name="Shiraki T."/>
            <person name="Suzuki S."/>
            <person name="Tagami M."/>
            <person name="Waki K."/>
            <person name="Watahiki A."/>
            <person name="Okamura-Oho Y."/>
            <person name="Suzuki H."/>
            <person name="Kawai J."/>
            <person name="Hayashizaki Y."/>
        </authorList>
    </citation>
    <scope>NUCLEOTIDE SEQUENCE [LARGE SCALE MRNA]</scope>
    <source>
        <strain evidence="8">C57BL/6J</strain>
        <strain evidence="9">NOD</strain>
        <tissue evidence="8">Thymus</tissue>
    </source>
</reference>
<reference evidence="6" key="3">
    <citation type="journal article" date="2004" name="Genome Res.">
        <title>The status, quality, and expansion of the NIH full-length cDNA project: the Mammalian Gene Collection (MGC).</title>
        <authorList>
            <consortium name="The MGC Project Team"/>
        </authorList>
    </citation>
    <scope>NUCLEOTIDE SEQUENCE [LARGE SCALE MRNA]</scope>
    <source>
        <strain evidence="6">C57BL/6J</strain>
        <tissue evidence="7">Limb</tissue>
        <tissue evidence="6">Mammary gland</tissue>
    </source>
</reference>
<reference key="4">
    <citation type="journal article" date="2010" name="Cell">
        <title>A tissue-specific atlas of mouse protein phosphorylation and expression.</title>
        <authorList>
            <person name="Huttlin E.L."/>
            <person name="Jedrychowski M.P."/>
            <person name="Elias J.E."/>
            <person name="Goswami T."/>
            <person name="Rad R."/>
            <person name="Beausoleil S.A."/>
            <person name="Villen J."/>
            <person name="Haas W."/>
            <person name="Sowa M.E."/>
            <person name="Gygi S.P."/>
        </authorList>
    </citation>
    <scope>IDENTIFICATION BY MASS SPECTROMETRY [LARGE SCALE ANALYSIS]</scope>
    <source>
        <tissue>Brain</tissue>
        <tissue>Brown adipose tissue</tissue>
        <tissue>Heart</tissue>
        <tissue>Kidney</tissue>
        <tissue>Liver</tissue>
        <tissue>Lung</tissue>
        <tissue>Pancreas</tissue>
        <tissue>Spleen</tissue>
        <tissue>Testis</tissue>
    </source>
</reference>
<feature type="initiator methionine" description="Removed" evidence="1">
    <location>
        <position position="1"/>
    </location>
</feature>
<feature type="chain" id="PRO_0000322547" description="Proteasome assembly chaperone 1">
    <location>
        <begin position="2"/>
        <end position="289"/>
    </location>
</feature>
<feature type="region of interest" description="Disordered" evidence="3">
    <location>
        <begin position="1"/>
        <end position="38"/>
    </location>
</feature>
<feature type="compositionally biased region" description="Basic and acidic residues" evidence="3">
    <location>
        <begin position="27"/>
        <end position="38"/>
    </location>
</feature>
<feature type="modified residue" description="N-acetylalanine" evidence="1">
    <location>
        <position position="2"/>
    </location>
</feature>
<feature type="modified residue" description="Phosphothreonine" evidence="1">
    <location>
        <position position="18"/>
    </location>
</feature>
<feature type="modified residue" description="Phosphothreonine" evidence="1">
    <location>
        <position position="55"/>
    </location>
</feature>
<feature type="modified residue" description="Phosphoserine" evidence="1">
    <location>
        <position position="181"/>
    </location>
</feature>
<feature type="modified residue" description="N6-acetyllysine" evidence="1">
    <location>
        <position position="265"/>
    </location>
</feature>
<feature type="sequence conflict" description="In Ref. 2; BAC40157." evidence="5" ref="2">
    <original>R</original>
    <variation>A</variation>
    <location>
        <position position="39"/>
    </location>
</feature>
<feature type="sequence conflict" description="In Ref. 2; BAC40157." evidence="5" ref="2">
    <original>I</original>
    <variation>T</variation>
    <location>
        <position position="229"/>
    </location>
</feature>
<comment type="function">
    <text evidence="1">Chaperone protein which promotes assembly of the 20S proteasome as part of a heterodimer with PSMG2. The PSMG1-PSMG2 heterodimer binds to the PSMA5 and PSMA7 proteasome subunits, promotes assembly of the proteasome alpha subunits into the heteroheptameric alpha ring and prevents alpha ring dimerization (By similarity).</text>
</comment>
<comment type="subunit">
    <text evidence="1">Forms a heterodimer with PSMG2. The PSMG1-PSMG2 heterodimer interacts directly with the PSMA5 and PSMA7 proteasome alpha subunits (By similarity).</text>
</comment>
<comment type="subcellular location">
    <subcellularLocation>
        <location evidence="1">Cytoplasm</location>
    </subcellularLocation>
    <subcellularLocation>
        <location evidence="1">Endoplasmic reticulum</location>
    </subcellularLocation>
</comment>
<comment type="tissue specificity">
    <text evidence="4">Highly expressed in testis with moderate expression in brain, liver and kidney and low levels in heart, skeletal muscle and pancreas.</text>
</comment>
<comment type="developmental stage">
    <text evidence="4">Expressed at a fairly constant level throughout embryonic development.</text>
</comment>
<comment type="PTM">
    <text evidence="1">Degraded by the proteasome upon completion of 20S proteasome maturation.</text>
</comment>
<comment type="similarity">
    <text evidence="2">Belongs to the PSMG1 family.</text>
</comment>
<accession>Q9JK23</accession>
<accession>Q8BU12</accession>